<protein>
    <recommendedName>
        <fullName evidence="1">Divalent metal cation transporter MntH</fullName>
    </recommendedName>
</protein>
<accession>C4ZVS8</accession>
<proteinExistence type="inferred from homology"/>
<evidence type="ECO:0000255" key="1">
    <source>
        <dbReference type="HAMAP-Rule" id="MF_00221"/>
    </source>
</evidence>
<gene>
    <name evidence="1" type="primary">mntH</name>
    <name type="ordered locus">BWG_2159</name>
</gene>
<feature type="chain" id="PRO_1000204255" description="Divalent metal cation transporter MntH">
    <location>
        <begin position="1"/>
        <end position="412"/>
    </location>
</feature>
<feature type="topological domain" description="Cytoplasmic" evidence="1">
    <location>
        <begin position="1"/>
        <end position="19"/>
    </location>
</feature>
<feature type="transmembrane region" description="Helical" evidence="1">
    <location>
        <begin position="20"/>
        <end position="39"/>
    </location>
</feature>
<feature type="topological domain" description="Periplasmic" evidence="1">
    <location>
        <begin position="40"/>
        <end position="51"/>
    </location>
</feature>
<feature type="transmembrane region" description="Helical" evidence="1">
    <location>
        <begin position="52"/>
        <end position="71"/>
    </location>
</feature>
<feature type="topological domain" description="Cytoplasmic" evidence="1">
    <location>
        <begin position="72"/>
        <end position="95"/>
    </location>
</feature>
<feature type="transmembrane region" description="Helical" evidence="1">
    <location>
        <begin position="96"/>
        <end position="118"/>
    </location>
</feature>
<feature type="topological domain" description="Periplasmic" evidence="1">
    <location>
        <begin position="119"/>
        <end position="125"/>
    </location>
</feature>
<feature type="transmembrane region" description="Helical" evidence="1">
    <location>
        <begin position="126"/>
        <end position="145"/>
    </location>
</feature>
<feature type="topological domain" description="Cytoplasmic" evidence="1">
    <location>
        <begin position="146"/>
        <end position="155"/>
    </location>
</feature>
<feature type="transmembrane region" description="Helical" evidence="1">
    <location>
        <begin position="156"/>
        <end position="175"/>
    </location>
</feature>
<feature type="topological domain" description="Periplasmic" evidence="1">
    <location>
        <begin position="176"/>
        <end position="196"/>
    </location>
</feature>
<feature type="transmembrane region" description="Helical" evidence="1">
    <location>
        <begin position="197"/>
        <end position="220"/>
    </location>
</feature>
<feature type="topological domain" description="Cytoplasmic" evidence="1">
    <location>
        <begin position="221"/>
        <end position="238"/>
    </location>
</feature>
<feature type="transmembrane region" description="Helical" evidence="1">
    <location>
        <begin position="239"/>
        <end position="258"/>
    </location>
</feature>
<feature type="topological domain" description="Periplasmic" evidence="1">
    <location>
        <begin position="259"/>
        <end position="276"/>
    </location>
</feature>
<feature type="transmembrane region" description="Helical" evidence="1">
    <location>
        <begin position="277"/>
        <end position="297"/>
    </location>
</feature>
<feature type="topological domain" description="Cytoplasmic" evidence="1">
    <location>
        <begin position="298"/>
        <end position="327"/>
    </location>
</feature>
<feature type="transmembrane region" description="Helical" evidence="1">
    <location>
        <begin position="328"/>
        <end position="344"/>
    </location>
</feature>
<feature type="topological domain" description="Periplasmic" evidence="1">
    <location>
        <begin position="345"/>
        <end position="350"/>
    </location>
</feature>
<feature type="transmembrane region" description="Helical" evidence="1">
    <location>
        <begin position="351"/>
        <end position="370"/>
    </location>
</feature>
<feature type="topological domain" description="Cytoplasmic" evidence="1">
    <location>
        <begin position="371"/>
        <end position="387"/>
    </location>
</feature>
<feature type="transmembrane region" description="Helical" evidence="1">
    <location>
        <begin position="388"/>
        <end position="406"/>
    </location>
</feature>
<feature type="topological domain" description="Periplasmic" evidence="1">
    <location>
        <begin position="407"/>
        <end position="412"/>
    </location>
</feature>
<organism>
    <name type="scientific">Escherichia coli (strain K12 / MC4100 / BW2952)</name>
    <dbReference type="NCBI Taxonomy" id="595496"/>
    <lineage>
        <taxon>Bacteria</taxon>
        <taxon>Pseudomonadati</taxon>
        <taxon>Pseudomonadota</taxon>
        <taxon>Gammaproteobacteria</taxon>
        <taxon>Enterobacterales</taxon>
        <taxon>Enterobacteriaceae</taxon>
        <taxon>Escherichia</taxon>
    </lineage>
</organism>
<dbReference type="EMBL" id="CP001396">
    <property type="protein sequence ID" value="ACR63719.1"/>
    <property type="molecule type" value="Genomic_DNA"/>
</dbReference>
<dbReference type="RefSeq" id="WP_000186369.1">
    <property type="nucleotide sequence ID" value="NC_012759.1"/>
</dbReference>
<dbReference type="SMR" id="C4ZVS8"/>
<dbReference type="KEGG" id="ebw:BWG_2159"/>
<dbReference type="HOGENOM" id="CLU_020088_2_0_6"/>
<dbReference type="GO" id="GO:0005886">
    <property type="term" value="C:plasma membrane"/>
    <property type="evidence" value="ECO:0007669"/>
    <property type="project" value="UniProtKB-SubCell"/>
</dbReference>
<dbReference type="GO" id="GO:0015086">
    <property type="term" value="F:cadmium ion transmembrane transporter activity"/>
    <property type="evidence" value="ECO:0007669"/>
    <property type="project" value="TreeGrafter"/>
</dbReference>
<dbReference type="GO" id="GO:0005384">
    <property type="term" value="F:manganese ion transmembrane transporter activity"/>
    <property type="evidence" value="ECO:0007669"/>
    <property type="project" value="TreeGrafter"/>
</dbReference>
<dbReference type="GO" id="GO:0046872">
    <property type="term" value="F:metal ion binding"/>
    <property type="evidence" value="ECO:0007669"/>
    <property type="project" value="UniProtKB-UniRule"/>
</dbReference>
<dbReference type="GO" id="GO:0015293">
    <property type="term" value="F:symporter activity"/>
    <property type="evidence" value="ECO:0007669"/>
    <property type="project" value="UniProtKB-UniRule"/>
</dbReference>
<dbReference type="GO" id="GO:0034755">
    <property type="term" value="P:iron ion transmembrane transport"/>
    <property type="evidence" value="ECO:0007669"/>
    <property type="project" value="TreeGrafter"/>
</dbReference>
<dbReference type="HAMAP" id="MF_00221">
    <property type="entry name" value="NRAMP"/>
    <property type="match status" value="1"/>
</dbReference>
<dbReference type="InterPro" id="IPR001046">
    <property type="entry name" value="NRAMP_fam"/>
</dbReference>
<dbReference type="NCBIfam" id="TIGR01197">
    <property type="entry name" value="nramp"/>
    <property type="match status" value="1"/>
</dbReference>
<dbReference type="NCBIfam" id="NF037982">
    <property type="entry name" value="Nramp_1"/>
    <property type="match status" value="1"/>
</dbReference>
<dbReference type="NCBIfam" id="NF001923">
    <property type="entry name" value="PRK00701.1"/>
    <property type="match status" value="1"/>
</dbReference>
<dbReference type="PANTHER" id="PTHR11706:SF33">
    <property type="entry name" value="NATURAL RESISTANCE-ASSOCIATED MACROPHAGE PROTEIN 2"/>
    <property type="match status" value="1"/>
</dbReference>
<dbReference type="PANTHER" id="PTHR11706">
    <property type="entry name" value="SOLUTE CARRIER PROTEIN FAMILY 11 MEMBER"/>
    <property type="match status" value="1"/>
</dbReference>
<dbReference type="Pfam" id="PF01566">
    <property type="entry name" value="Nramp"/>
    <property type="match status" value="1"/>
</dbReference>
<dbReference type="PRINTS" id="PR00447">
    <property type="entry name" value="NATRESASSCMP"/>
</dbReference>
<reference key="1">
    <citation type="journal article" date="2009" name="J. Bacteriol.">
        <title>Genomic sequencing reveals regulatory mutations and recombinational events in the widely used MC4100 lineage of Escherichia coli K-12.</title>
        <authorList>
            <person name="Ferenci T."/>
            <person name="Zhou Z."/>
            <person name="Betteridge T."/>
            <person name="Ren Y."/>
            <person name="Liu Y."/>
            <person name="Feng L."/>
            <person name="Reeves P.R."/>
            <person name="Wang L."/>
        </authorList>
    </citation>
    <scope>NUCLEOTIDE SEQUENCE [LARGE SCALE GENOMIC DNA]</scope>
    <source>
        <strain>K12 / MC4100 / BW2952</strain>
    </source>
</reference>
<comment type="function">
    <text evidence="1">H(+)-stimulated, divalent metal cation uptake system.</text>
</comment>
<comment type="subcellular location">
    <subcellularLocation>
        <location evidence="1">Cell inner membrane</location>
        <topology evidence="1">Multi-pass membrane protein</topology>
    </subcellularLocation>
</comment>
<comment type="similarity">
    <text evidence="1">Belongs to the NRAMP family.</text>
</comment>
<name>MNTH_ECOBW</name>
<sequence>MTNYRVESSSGRAARKMRLALMGPAFIAAIGYIDPGNFATNIQAGASFGYQLLWVVVWANLMAMLIQILSAKLGIATGKNLAEQIRDHYPRPVVWFYWVQAEIIAMATDLAEFIGAAIGFKLILGVSLLQGAVLTGIATFLILMLQRRGQKPLEKVIGGLLLFVAAAYIVELIFSQPNLAQLGKGMVIPSLPTSEAVFLAAGVLGATIMPHVIYLHSSLTQHLHGGSRQQRYSATKWDVAIAMTIAGFVNLAMMATAAAAFHFSGHTGVADLDEAYLTLQPLLSHAAATVFGLSLVAAGLSSTVVGTLAGQVVMQGFIRFHIPLWVRRTVTMLPSFIVILMGLDPTRILVMSQVLLSFGIALALVPLLIFTSDSKLMGDLVNSKRVKQTGWVIVVLVVALNIWLLVGTALGL</sequence>
<keyword id="KW-0997">Cell inner membrane</keyword>
<keyword id="KW-1003">Cell membrane</keyword>
<keyword id="KW-0406">Ion transport</keyword>
<keyword id="KW-0472">Membrane</keyword>
<keyword id="KW-0769">Symport</keyword>
<keyword id="KW-0812">Transmembrane</keyword>
<keyword id="KW-1133">Transmembrane helix</keyword>
<keyword id="KW-0813">Transport</keyword>